<comment type="function">
    <text evidence="1">Catalyzes the attachment of alanine to tRNA(Ala) in a two-step reaction: alanine is first activated by ATP to form Ala-AMP and then transferred to the acceptor end of tRNA(Ala). Also edits incorrectly charged Ser-tRNA(Ala) and Gly-tRNA(Ala) via its editing domain.</text>
</comment>
<comment type="catalytic activity">
    <reaction evidence="1">
        <text>tRNA(Ala) + L-alanine + ATP = L-alanyl-tRNA(Ala) + AMP + diphosphate</text>
        <dbReference type="Rhea" id="RHEA:12540"/>
        <dbReference type="Rhea" id="RHEA-COMP:9657"/>
        <dbReference type="Rhea" id="RHEA-COMP:9923"/>
        <dbReference type="ChEBI" id="CHEBI:30616"/>
        <dbReference type="ChEBI" id="CHEBI:33019"/>
        <dbReference type="ChEBI" id="CHEBI:57972"/>
        <dbReference type="ChEBI" id="CHEBI:78442"/>
        <dbReference type="ChEBI" id="CHEBI:78497"/>
        <dbReference type="ChEBI" id="CHEBI:456215"/>
        <dbReference type="EC" id="6.1.1.7"/>
    </reaction>
</comment>
<comment type="cofactor">
    <cofactor evidence="1">
        <name>Zn(2+)</name>
        <dbReference type="ChEBI" id="CHEBI:29105"/>
    </cofactor>
    <text evidence="1">Binds 1 zinc ion per subunit.</text>
</comment>
<comment type="subcellular location">
    <subcellularLocation>
        <location evidence="1">Cytoplasm</location>
    </subcellularLocation>
</comment>
<comment type="domain">
    <text evidence="1">Consists of three domains; the N-terminal catalytic domain, the editing domain and the C-terminal C-Ala domain. The editing domain removes incorrectly charged amino acids, while the C-Ala domain, along with tRNA(Ala), serves as a bridge to cooperatively bring together the editing and aminoacylation centers thus stimulating deacylation of misacylated tRNAs.</text>
</comment>
<comment type="similarity">
    <text evidence="1">Belongs to the class-II aminoacyl-tRNA synthetase family.</text>
</comment>
<organism>
    <name type="scientific">Burkholderia pseudomallei (strain K96243)</name>
    <dbReference type="NCBI Taxonomy" id="272560"/>
    <lineage>
        <taxon>Bacteria</taxon>
        <taxon>Pseudomonadati</taxon>
        <taxon>Pseudomonadota</taxon>
        <taxon>Betaproteobacteria</taxon>
        <taxon>Burkholderiales</taxon>
        <taxon>Burkholderiaceae</taxon>
        <taxon>Burkholderia</taxon>
        <taxon>pseudomallei group</taxon>
    </lineage>
</organism>
<reference key="1">
    <citation type="journal article" date="2004" name="Proc. Natl. Acad. Sci. U.S.A.">
        <title>Genomic plasticity of the causative agent of melioidosis, Burkholderia pseudomallei.</title>
        <authorList>
            <person name="Holden M.T.G."/>
            <person name="Titball R.W."/>
            <person name="Peacock S.J."/>
            <person name="Cerdeno-Tarraga A.-M."/>
            <person name="Atkins T."/>
            <person name="Crossman L.C."/>
            <person name="Pitt T."/>
            <person name="Churcher C."/>
            <person name="Mungall K.L."/>
            <person name="Bentley S.D."/>
            <person name="Sebaihia M."/>
            <person name="Thomson N.R."/>
            <person name="Bason N."/>
            <person name="Beacham I.R."/>
            <person name="Brooks K."/>
            <person name="Brown K.A."/>
            <person name="Brown N.F."/>
            <person name="Challis G.L."/>
            <person name="Cherevach I."/>
            <person name="Chillingworth T."/>
            <person name="Cronin A."/>
            <person name="Crossett B."/>
            <person name="Davis P."/>
            <person name="DeShazer D."/>
            <person name="Feltwell T."/>
            <person name="Fraser A."/>
            <person name="Hance Z."/>
            <person name="Hauser H."/>
            <person name="Holroyd S."/>
            <person name="Jagels K."/>
            <person name="Keith K.E."/>
            <person name="Maddison M."/>
            <person name="Moule S."/>
            <person name="Price C."/>
            <person name="Quail M.A."/>
            <person name="Rabbinowitsch E."/>
            <person name="Rutherford K."/>
            <person name="Sanders M."/>
            <person name="Simmonds M."/>
            <person name="Songsivilai S."/>
            <person name="Stevens K."/>
            <person name="Tumapa S."/>
            <person name="Vesaratchavest M."/>
            <person name="Whitehead S."/>
            <person name="Yeats C."/>
            <person name="Barrell B.G."/>
            <person name="Oyston P.C.F."/>
            <person name="Parkhill J."/>
        </authorList>
    </citation>
    <scope>NUCLEOTIDE SEQUENCE [LARGE SCALE GENOMIC DNA]</scope>
    <source>
        <strain>K96243</strain>
    </source>
</reference>
<dbReference type="EC" id="6.1.1.7" evidence="1"/>
<dbReference type="EMBL" id="BX571965">
    <property type="protein sequence ID" value="CAH36008.1"/>
    <property type="molecule type" value="Genomic_DNA"/>
</dbReference>
<dbReference type="RefSeq" id="WP_004204967.1">
    <property type="nucleotide sequence ID" value="NZ_CP009538.1"/>
</dbReference>
<dbReference type="RefSeq" id="YP_108607.1">
    <property type="nucleotide sequence ID" value="NC_006350.1"/>
</dbReference>
<dbReference type="SMR" id="Q63TF9"/>
<dbReference type="STRING" id="272560.BPSL2009"/>
<dbReference type="GeneID" id="93059980"/>
<dbReference type="KEGG" id="bps:BPSL2009"/>
<dbReference type="PATRIC" id="fig|272560.51.peg.4163"/>
<dbReference type="eggNOG" id="COG0013">
    <property type="taxonomic scope" value="Bacteria"/>
</dbReference>
<dbReference type="Proteomes" id="UP000000605">
    <property type="component" value="Chromosome 1"/>
</dbReference>
<dbReference type="GO" id="GO:0005829">
    <property type="term" value="C:cytosol"/>
    <property type="evidence" value="ECO:0007669"/>
    <property type="project" value="TreeGrafter"/>
</dbReference>
<dbReference type="GO" id="GO:0004813">
    <property type="term" value="F:alanine-tRNA ligase activity"/>
    <property type="evidence" value="ECO:0007669"/>
    <property type="project" value="UniProtKB-UniRule"/>
</dbReference>
<dbReference type="GO" id="GO:0002161">
    <property type="term" value="F:aminoacyl-tRNA deacylase activity"/>
    <property type="evidence" value="ECO:0007669"/>
    <property type="project" value="TreeGrafter"/>
</dbReference>
<dbReference type="GO" id="GO:0005524">
    <property type="term" value="F:ATP binding"/>
    <property type="evidence" value="ECO:0007669"/>
    <property type="project" value="UniProtKB-UniRule"/>
</dbReference>
<dbReference type="GO" id="GO:0000049">
    <property type="term" value="F:tRNA binding"/>
    <property type="evidence" value="ECO:0007669"/>
    <property type="project" value="UniProtKB-KW"/>
</dbReference>
<dbReference type="GO" id="GO:0008270">
    <property type="term" value="F:zinc ion binding"/>
    <property type="evidence" value="ECO:0007669"/>
    <property type="project" value="UniProtKB-UniRule"/>
</dbReference>
<dbReference type="GO" id="GO:0006419">
    <property type="term" value="P:alanyl-tRNA aminoacylation"/>
    <property type="evidence" value="ECO:0007669"/>
    <property type="project" value="UniProtKB-UniRule"/>
</dbReference>
<dbReference type="GO" id="GO:0045892">
    <property type="term" value="P:negative regulation of DNA-templated transcription"/>
    <property type="evidence" value="ECO:0007669"/>
    <property type="project" value="TreeGrafter"/>
</dbReference>
<dbReference type="CDD" id="cd00673">
    <property type="entry name" value="AlaRS_core"/>
    <property type="match status" value="1"/>
</dbReference>
<dbReference type="FunFam" id="2.40.30.130:FF:000001">
    <property type="entry name" value="Alanine--tRNA ligase"/>
    <property type="match status" value="1"/>
</dbReference>
<dbReference type="FunFam" id="3.10.310.40:FF:000001">
    <property type="entry name" value="Alanine--tRNA ligase"/>
    <property type="match status" value="1"/>
</dbReference>
<dbReference type="FunFam" id="3.30.54.20:FF:000001">
    <property type="entry name" value="Alanine--tRNA ligase"/>
    <property type="match status" value="1"/>
</dbReference>
<dbReference type="FunFam" id="3.30.930.10:FF:000004">
    <property type="entry name" value="Alanine--tRNA ligase"/>
    <property type="match status" value="1"/>
</dbReference>
<dbReference type="FunFam" id="3.30.980.10:FF:000004">
    <property type="entry name" value="Alanine--tRNA ligase, cytoplasmic"/>
    <property type="match status" value="1"/>
</dbReference>
<dbReference type="Gene3D" id="2.40.30.130">
    <property type="match status" value="1"/>
</dbReference>
<dbReference type="Gene3D" id="3.10.310.40">
    <property type="match status" value="1"/>
</dbReference>
<dbReference type="Gene3D" id="3.30.54.20">
    <property type="match status" value="1"/>
</dbReference>
<dbReference type="Gene3D" id="6.10.250.550">
    <property type="match status" value="1"/>
</dbReference>
<dbReference type="Gene3D" id="3.30.930.10">
    <property type="entry name" value="Bira Bifunctional Protein, Domain 2"/>
    <property type="match status" value="1"/>
</dbReference>
<dbReference type="Gene3D" id="3.30.980.10">
    <property type="entry name" value="Threonyl-trna Synthetase, Chain A, domain 2"/>
    <property type="match status" value="1"/>
</dbReference>
<dbReference type="HAMAP" id="MF_00036_B">
    <property type="entry name" value="Ala_tRNA_synth_B"/>
    <property type="match status" value="1"/>
</dbReference>
<dbReference type="InterPro" id="IPR045864">
    <property type="entry name" value="aa-tRNA-synth_II/BPL/LPL"/>
</dbReference>
<dbReference type="InterPro" id="IPR002318">
    <property type="entry name" value="Ala-tRNA-lgiase_IIc"/>
</dbReference>
<dbReference type="InterPro" id="IPR018162">
    <property type="entry name" value="Ala-tRNA-ligase_IIc_anticod-bd"/>
</dbReference>
<dbReference type="InterPro" id="IPR018165">
    <property type="entry name" value="Ala-tRNA-synth_IIc_core"/>
</dbReference>
<dbReference type="InterPro" id="IPR018164">
    <property type="entry name" value="Ala-tRNA-synth_IIc_N"/>
</dbReference>
<dbReference type="InterPro" id="IPR050058">
    <property type="entry name" value="Ala-tRNA_ligase"/>
</dbReference>
<dbReference type="InterPro" id="IPR023033">
    <property type="entry name" value="Ala_tRNA_ligase_euk/bac"/>
</dbReference>
<dbReference type="InterPro" id="IPR003156">
    <property type="entry name" value="DHHA1_dom"/>
</dbReference>
<dbReference type="InterPro" id="IPR018163">
    <property type="entry name" value="Thr/Ala-tRNA-synth_IIc_edit"/>
</dbReference>
<dbReference type="InterPro" id="IPR009000">
    <property type="entry name" value="Transl_B-barrel_sf"/>
</dbReference>
<dbReference type="InterPro" id="IPR012947">
    <property type="entry name" value="tRNA_SAD"/>
</dbReference>
<dbReference type="NCBIfam" id="TIGR00344">
    <property type="entry name" value="alaS"/>
    <property type="match status" value="1"/>
</dbReference>
<dbReference type="PANTHER" id="PTHR11777:SF9">
    <property type="entry name" value="ALANINE--TRNA LIGASE, CYTOPLASMIC"/>
    <property type="match status" value="1"/>
</dbReference>
<dbReference type="PANTHER" id="PTHR11777">
    <property type="entry name" value="ALANYL-TRNA SYNTHETASE"/>
    <property type="match status" value="1"/>
</dbReference>
<dbReference type="Pfam" id="PF02272">
    <property type="entry name" value="DHHA1"/>
    <property type="match status" value="1"/>
</dbReference>
<dbReference type="Pfam" id="PF01411">
    <property type="entry name" value="tRNA-synt_2c"/>
    <property type="match status" value="1"/>
</dbReference>
<dbReference type="Pfam" id="PF07973">
    <property type="entry name" value="tRNA_SAD"/>
    <property type="match status" value="1"/>
</dbReference>
<dbReference type="PRINTS" id="PR00980">
    <property type="entry name" value="TRNASYNTHALA"/>
</dbReference>
<dbReference type="SMART" id="SM00863">
    <property type="entry name" value="tRNA_SAD"/>
    <property type="match status" value="1"/>
</dbReference>
<dbReference type="SUPFAM" id="SSF55681">
    <property type="entry name" value="Class II aaRS and biotin synthetases"/>
    <property type="match status" value="1"/>
</dbReference>
<dbReference type="SUPFAM" id="SSF101353">
    <property type="entry name" value="Putative anticodon-binding domain of alanyl-tRNA synthetase (AlaRS)"/>
    <property type="match status" value="1"/>
</dbReference>
<dbReference type="SUPFAM" id="SSF55186">
    <property type="entry name" value="ThrRS/AlaRS common domain"/>
    <property type="match status" value="1"/>
</dbReference>
<dbReference type="SUPFAM" id="SSF50447">
    <property type="entry name" value="Translation proteins"/>
    <property type="match status" value="1"/>
</dbReference>
<dbReference type="PROSITE" id="PS50860">
    <property type="entry name" value="AA_TRNA_LIGASE_II_ALA"/>
    <property type="match status" value="1"/>
</dbReference>
<proteinExistence type="inferred from homology"/>
<keyword id="KW-0030">Aminoacyl-tRNA synthetase</keyword>
<keyword id="KW-0067">ATP-binding</keyword>
<keyword id="KW-0963">Cytoplasm</keyword>
<keyword id="KW-0436">Ligase</keyword>
<keyword id="KW-0479">Metal-binding</keyword>
<keyword id="KW-0547">Nucleotide-binding</keyword>
<keyword id="KW-0648">Protein biosynthesis</keyword>
<keyword id="KW-1185">Reference proteome</keyword>
<keyword id="KW-0694">RNA-binding</keyword>
<keyword id="KW-0820">tRNA-binding</keyword>
<keyword id="KW-0862">Zinc</keyword>
<accession>Q63TF9</accession>
<feature type="chain" id="PRO_0000075082" description="Alanine--tRNA ligase">
    <location>
        <begin position="1"/>
        <end position="874"/>
    </location>
</feature>
<feature type="binding site" evidence="1">
    <location>
        <position position="564"/>
    </location>
    <ligand>
        <name>Zn(2+)</name>
        <dbReference type="ChEBI" id="CHEBI:29105"/>
    </ligand>
</feature>
<feature type="binding site" evidence="1">
    <location>
        <position position="568"/>
    </location>
    <ligand>
        <name>Zn(2+)</name>
        <dbReference type="ChEBI" id="CHEBI:29105"/>
    </ligand>
</feature>
<feature type="binding site" evidence="1">
    <location>
        <position position="665"/>
    </location>
    <ligand>
        <name>Zn(2+)</name>
        <dbReference type="ChEBI" id="CHEBI:29105"/>
    </ligand>
</feature>
<feature type="binding site" evidence="1">
    <location>
        <position position="669"/>
    </location>
    <ligand>
        <name>Zn(2+)</name>
        <dbReference type="ChEBI" id="CHEBI:29105"/>
    </ligand>
</feature>
<sequence>MKAAEIREKFLKFFESKGHTIVRSSSLVPGNDPTLLFTNSGMVQFKDVFLGAETRPYSRATTAQRSVRAGGKHNDLENVGYTARHHTFFEMLGNFSFGDYFKRDAIHYAWELLTSVYKLPADKLWVTVYHDDDEAYDIWAKEVGVPAERIIRIGDNKGARYASDNFWQMGDTGPCGPCSEIFYDHGPDVWGGPPGSPEEDGDRYIEIWNLVFMQFNRDAQGNMTRLPKPCVDTGMGLERIAAVLQHVHSNYEIDLFQQLIKASARETGVADLANNSLKVIADHIRACSFLIVDGVIPGNEGRGYVLRRIVRRAIRHGYKLGRKAPFFHKLVADLVAEMGAAYPELKEAEPRVTDVLRQEEERFFETIEHGMSILEAALAELDAAGGKTLDGELAFKLHDTYGFPLDLTADVCRERGVTVDEPAFDDAMARQREQARAAGKFKATQGLEYTGAKTTFHGYEEIAFDDAKVVALYVEGASVGEVKAGESAVVVLDHTPFYAESGGQVGDQGVLANAATRFAVGDTLKVQADVIGHHGELEQGTLKVGDVVRAEIDAARRARTARNHSATHLMHKALRDVLGSHVQQKGSLVDADKTRFDFAHNAPLTDDEIRRVEAIVNEQVLANAPGIVRVMPYDDAVKGGAMALFGEKYGDEVRVLDLGFSRELCGGTHVHRTGDIGLFKIVAEGGVAAGIRRVEAITGDNAVRYVQALDARVNAAAAALKAQPSELLQRIGQVQDQVKSLEKELGALKSKLASSQGDELAQQAVEVGGVHVLAATLDGADAKTLRETVDKLKDKLKSAAIVLAAVDGGKVSLIAGVTADASKKVKAGELVNFVAQQVGGKGGGRPDMAQAGGTEPAKLPAALAGVKGWVEARL</sequence>
<gene>
    <name evidence="1" type="primary">alaS</name>
    <name type="ordered locus">BPSL2009</name>
</gene>
<protein>
    <recommendedName>
        <fullName evidence="1">Alanine--tRNA ligase</fullName>
        <ecNumber evidence="1">6.1.1.7</ecNumber>
    </recommendedName>
    <alternativeName>
        <fullName evidence="1">Alanyl-tRNA synthetase</fullName>
        <shortName evidence="1">AlaRS</shortName>
    </alternativeName>
</protein>
<name>SYA_BURPS</name>
<evidence type="ECO:0000255" key="1">
    <source>
        <dbReference type="HAMAP-Rule" id="MF_00036"/>
    </source>
</evidence>